<proteinExistence type="inferred from homology"/>
<gene>
    <name evidence="1" type="primary">aroQ</name>
    <name type="ordered locus">APP7_1952</name>
</gene>
<evidence type="ECO:0000255" key="1">
    <source>
        <dbReference type="HAMAP-Rule" id="MF_00169"/>
    </source>
</evidence>
<dbReference type="EC" id="4.2.1.10" evidence="1"/>
<dbReference type="EMBL" id="CP001091">
    <property type="protein sequence ID" value="ACE62604.1"/>
    <property type="molecule type" value="Genomic_DNA"/>
</dbReference>
<dbReference type="RefSeq" id="WP_005599518.1">
    <property type="nucleotide sequence ID" value="NC_010939.1"/>
</dbReference>
<dbReference type="SMR" id="B3GZB8"/>
<dbReference type="GeneID" id="48600167"/>
<dbReference type="KEGG" id="apa:APP7_1952"/>
<dbReference type="HOGENOM" id="CLU_090968_1_0_6"/>
<dbReference type="UniPathway" id="UPA00053">
    <property type="reaction ID" value="UER00086"/>
</dbReference>
<dbReference type="Proteomes" id="UP000001226">
    <property type="component" value="Chromosome"/>
</dbReference>
<dbReference type="GO" id="GO:0003855">
    <property type="term" value="F:3-dehydroquinate dehydratase activity"/>
    <property type="evidence" value="ECO:0007669"/>
    <property type="project" value="UniProtKB-UniRule"/>
</dbReference>
<dbReference type="GO" id="GO:0008652">
    <property type="term" value="P:amino acid biosynthetic process"/>
    <property type="evidence" value="ECO:0007669"/>
    <property type="project" value="UniProtKB-KW"/>
</dbReference>
<dbReference type="GO" id="GO:0009073">
    <property type="term" value="P:aromatic amino acid family biosynthetic process"/>
    <property type="evidence" value="ECO:0007669"/>
    <property type="project" value="UniProtKB-KW"/>
</dbReference>
<dbReference type="GO" id="GO:0009423">
    <property type="term" value="P:chorismate biosynthetic process"/>
    <property type="evidence" value="ECO:0007669"/>
    <property type="project" value="UniProtKB-UniRule"/>
</dbReference>
<dbReference type="GO" id="GO:0019631">
    <property type="term" value="P:quinate catabolic process"/>
    <property type="evidence" value="ECO:0007669"/>
    <property type="project" value="TreeGrafter"/>
</dbReference>
<dbReference type="CDD" id="cd00466">
    <property type="entry name" value="DHQase_II"/>
    <property type="match status" value="1"/>
</dbReference>
<dbReference type="Gene3D" id="3.40.50.9100">
    <property type="entry name" value="Dehydroquinase, class II"/>
    <property type="match status" value="1"/>
</dbReference>
<dbReference type="HAMAP" id="MF_00169">
    <property type="entry name" value="AroQ"/>
    <property type="match status" value="1"/>
</dbReference>
<dbReference type="InterPro" id="IPR001874">
    <property type="entry name" value="DHquinase_II"/>
</dbReference>
<dbReference type="InterPro" id="IPR018509">
    <property type="entry name" value="DHquinase_II_CS"/>
</dbReference>
<dbReference type="InterPro" id="IPR036441">
    <property type="entry name" value="DHquinase_II_sf"/>
</dbReference>
<dbReference type="NCBIfam" id="TIGR01088">
    <property type="entry name" value="aroQ"/>
    <property type="match status" value="1"/>
</dbReference>
<dbReference type="NCBIfam" id="NF003804">
    <property type="entry name" value="PRK05395.1-1"/>
    <property type="match status" value="1"/>
</dbReference>
<dbReference type="NCBIfam" id="NF003805">
    <property type="entry name" value="PRK05395.1-2"/>
    <property type="match status" value="1"/>
</dbReference>
<dbReference type="NCBIfam" id="NF003806">
    <property type="entry name" value="PRK05395.1-3"/>
    <property type="match status" value="1"/>
</dbReference>
<dbReference type="NCBIfam" id="NF003807">
    <property type="entry name" value="PRK05395.1-4"/>
    <property type="match status" value="1"/>
</dbReference>
<dbReference type="PANTHER" id="PTHR21272">
    <property type="entry name" value="CATABOLIC 3-DEHYDROQUINASE"/>
    <property type="match status" value="1"/>
</dbReference>
<dbReference type="PANTHER" id="PTHR21272:SF3">
    <property type="entry name" value="CATABOLIC 3-DEHYDROQUINASE"/>
    <property type="match status" value="1"/>
</dbReference>
<dbReference type="Pfam" id="PF01220">
    <property type="entry name" value="DHquinase_II"/>
    <property type="match status" value="1"/>
</dbReference>
<dbReference type="PIRSF" id="PIRSF001399">
    <property type="entry name" value="DHquinase_II"/>
    <property type="match status" value="1"/>
</dbReference>
<dbReference type="SUPFAM" id="SSF52304">
    <property type="entry name" value="Type II 3-dehydroquinate dehydratase"/>
    <property type="match status" value="1"/>
</dbReference>
<dbReference type="PROSITE" id="PS01029">
    <property type="entry name" value="DEHYDROQUINASE_II"/>
    <property type="match status" value="1"/>
</dbReference>
<accession>B3GZB8</accession>
<sequence>MKKILLLNGPNLNMLGKREPHIYGSQTLSDIEQHLQQSAQAQGYELDYFQANGEESLINRIHQAFQNTDFIIINPGAFTHTSVAIRDALLAVSIPFIEVHLSNVHAREPFRHHSYLSDVAKGVICGLGAKGYDYALDFAISELQKIQLGEMMNG</sequence>
<organism>
    <name type="scientific">Actinobacillus pleuropneumoniae serotype 7 (strain AP76)</name>
    <dbReference type="NCBI Taxonomy" id="537457"/>
    <lineage>
        <taxon>Bacteria</taxon>
        <taxon>Pseudomonadati</taxon>
        <taxon>Pseudomonadota</taxon>
        <taxon>Gammaproteobacteria</taxon>
        <taxon>Pasteurellales</taxon>
        <taxon>Pasteurellaceae</taxon>
        <taxon>Actinobacillus</taxon>
    </lineage>
</organism>
<keyword id="KW-0028">Amino-acid biosynthesis</keyword>
<keyword id="KW-0057">Aromatic amino acid biosynthesis</keyword>
<keyword id="KW-0456">Lyase</keyword>
<comment type="function">
    <text evidence="1">Catalyzes a trans-dehydration via an enolate intermediate.</text>
</comment>
<comment type="catalytic activity">
    <reaction evidence="1">
        <text>3-dehydroquinate = 3-dehydroshikimate + H2O</text>
        <dbReference type="Rhea" id="RHEA:21096"/>
        <dbReference type="ChEBI" id="CHEBI:15377"/>
        <dbReference type="ChEBI" id="CHEBI:16630"/>
        <dbReference type="ChEBI" id="CHEBI:32364"/>
        <dbReference type="EC" id="4.2.1.10"/>
    </reaction>
</comment>
<comment type="pathway">
    <text evidence="1">Metabolic intermediate biosynthesis; chorismate biosynthesis; chorismate from D-erythrose 4-phosphate and phosphoenolpyruvate: step 3/7.</text>
</comment>
<comment type="subunit">
    <text evidence="1">Homododecamer.</text>
</comment>
<comment type="similarity">
    <text evidence="1">Belongs to the type-II 3-dehydroquinase family.</text>
</comment>
<feature type="chain" id="PRO_1000097589" description="3-dehydroquinate dehydratase">
    <location>
        <begin position="1"/>
        <end position="154"/>
    </location>
</feature>
<feature type="active site" description="Proton acceptor" evidence="1">
    <location>
        <position position="23"/>
    </location>
</feature>
<feature type="active site" description="Proton donor" evidence="1">
    <location>
        <position position="100"/>
    </location>
</feature>
<feature type="binding site" evidence="1">
    <location>
        <position position="74"/>
    </location>
    <ligand>
        <name>substrate</name>
    </ligand>
</feature>
<feature type="binding site" evidence="1">
    <location>
        <position position="80"/>
    </location>
    <ligand>
        <name>substrate</name>
    </ligand>
</feature>
<feature type="binding site" evidence="1">
    <location>
        <position position="87"/>
    </location>
    <ligand>
        <name>substrate</name>
    </ligand>
</feature>
<feature type="binding site" evidence="1">
    <location>
        <begin position="101"/>
        <end position="102"/>
    </location>
    <ligand>
        <name>substrate</name>
    </ligand>
</feature>
<feature type="binding site" evidence="1">
    <location>
        <position position="111"/>
    </location>
    <ligand>
        <name>substrate</name>
    </ligand>
</feature>
<feature type="site" description="Transition state stabilizer" evidence="1">
    <location>
        <position position="18"/>
    </location>
</feature>
<reference key="1">
    <citation type="submission" date="2008-06" db="EMBL/GenBank/DDBJ databases">
        <title>Genome and proteome analysis of A. pleuropneumoniae serotype 7.</title>
        <authorList>
            <person name="Linke B."/>
            <person name="Buettner F."/>
            <person name="Martinez-Arias R."/>
            <person name="Goesmann A."/>
            <person name="Baltes N."/>
            <person name="Tegetmeyer H."/>
            <person name="Singh M."/>
            <person name="Gerlach G.F."/>
        </authorList>
    </citation>
    <scope>NUCLEOTIDE SEQUENCE [LARGE SCALE GENOMIC DNA]</scope>
    <source>
        <strain>AP76</strain>
    </source>
</reference>
<name>AROQ_ACTP7</name>
<protein>
    <recommendedName>
        <fullName evidence="1">3-dehydroquinate dehydratase</fullName>
        <shortName evidence="1">3-dehydroquinase</shortName>
        <ecNumber evidence="1">4.2.1.10</ecNumber>
    </recommendedName>
    <alternativeName>
        <fullName evidence="1">Type II DHQase</fullName>
    </alternativeName>
</protein>